<dbReference type="EMBL" id="CY020298">
    <property type="status" value="NOT_ANNOTATED_CDS"/>
    <property type="molecule type" value="Viral_cRNA"/>
</dbReference>
<dbReference type="SMR" id="P0CK67"/>
<dbReference type="Proteomes" id="UP000008025">
    <property type="component" value="Genome"/>
</dbReference>
<dbReference type="GO" id="GO:0003723">
    <property type="term" value="F:RNA binding"/>
    <property type="evidence" value="ECO:0007669"/>
    <property type="project" value="InterPro"/>
</dbReference>
<dbReference type="GO" id="GO:0039694">
    <property type="term" value="P:viral RNA genome replication"/>
    <property type="evidence" value="ECO:0007669"/>
    <property type="project" value="InterPro"/>
</dbReference>
<dbReference type="GO" id="GO:0075523">
    <property type="term" value="P:viral translational frameshifting"/>
    <property type="evidence" value="ECO:0007669"/>
    <property type="project" value="UniProtKB-KW"/>
</dbReference>
<dbReference type="FunFam" id="3.40.91.90:FF:000001">
    <property type="entry name" value="Polymerase acidic protein"/>
    <property type="match status" value="1"/>
</dbReference>
<dbReference type="Gene3D" id="3.40.91.90">
    <property type="entry name" value="Influenza RNA-dependent RNA polymerase subunit PA, endonuclease domain"/>
    <property type="match status" value="1"/>
</dbReference>
<dbReference type="InterPro" id="IPR001009">
    <property type="entry name" value="PA/PA-X"/>
</dbReference>
<dbReference type="InterPro" id="IPR038372">
    <property type="entry name" value="PA/PA-X_sf"/>
</dbReference>
<dbReference type="Pfam" id="PF00603">
    <property type="entry name" value="Flu_PA"/>
    <property type="match status" value="1"/>
</dbReference>
<name>PAX_I77AA</name>
<feature type="chain" id="PRO_0000419350" description="Protein PA-X">
    <location>
        <begin position="1"/>
        <end position="252"/>
    </location>
</feature>
<feature type="active site" evidence="2">
    <location>
        <position position="80"/>
    </location>
</feature>
<feature type="active site" evidence="2">
    <location>
        <position position="108"/>
    </location>
</feature>
<feature type="site" description="Important for efficient shutoff activity" evidence="5">
    <location>
        <position position="28"/>
    </location>
</feature>
<feature type="site" description="Important for efficient shutoff activity" evidence="5">
    <location>
        <position position="65"/>
    </location>
</feature>
<feature type="site" description="Important for efficient shutoff activity and nuclear localization" evidence="4">
    <location>
        <position position="195"/>
    </location>
</feature>
<feature type="site" description="Important for efficient shutoff activity and nuclear localization" evidence="4">
    <location>
        <position position="198"/>
    </location>
</feature>
<feature type="site" description="Important for efficient shutoff activity and nuclear localization" evidence="4">
    <location>
        <position position="199"/>
    </location>
</feature>
<feature type="site" description="Important for efficient shutoff activity" evidence="3">
    <location>
        <position position="202"/>
    </location>
</feature>
<feature type="site" description="Important for efficient shutoff activity" evidence="3">
    <location>
        <position position="203"/>
    </location>
</feature>
<feature type="site" description="Important for efficient shutoff activity" evidence="3">
    <location>
        <position position="206"/>
    </location>
</feature>
<organismHost>
    <name type="scientific">Aves</name>
    <dbReference type="NCBI Taxonomy" id="8782"/>
</organismHost>
<organismHost>
    <name type="scientific">Homo sapiens</name>
    <name type="common">Human</name>
    <dbReference type="NCBI Taxonomy" id="9606"/>
</organismHost>
<organismHost>
    <name type="scientific">Sus scrofa</name>
    <name type="common">Pig</name>
    <dbReference type="NCBI Taxonomy" id="9823"/>
</organismHost>
<gene>
    <name type="primary">PA</name>
</gene>
<evidence type="ECO:0000250" key="1">
    <source>
        <dbReference type="UniProtKB" id="P0CK64"/>
    </source>
</evidence>
<evidence type="ECO:0000250" key="2">
    <source>
        <dbReference type="UniProtKB" id="P0CK68"/>
    </source>
</evidence>
<evidence type="ECO:0000250" key="3">
    <source>
        <dbReference type="UniProtKB" id="P0DJW8"/>
    </source>
</evidence>
<evidence type="ECO:0000250" key="4">
    <source>
        <dbReference type="UniProtKB" id="P0DXO5"/>
    </source>
</evidence>
<evidence type="ECO:0000250" key="5">
    <source>
        <dbReference type="UniProtKB" id="P0DXO6"/>
    </source>
</evidence>
<evidence type="ECO:0000305" key="6"/>
<accession>P0CK67</accession>
<proteinExistence type="inferred from homology"/>
<sequence>MEDFVRQCFNPMIVELAEKAMKEYGEDLKIETNKFAAICTHLEVCFMYSDFHFINEQGESIIVELDDPNALLKHRFEIIEGRDRTMAWTVVNSICNTTGAEKPKFLPDLYDYKENRFIEIGVTRREVHIYYLEKANKIKSEKTHIHIFSFTGEEMATKADYTLDEESRARIKTRLFTIRQEMASRGLWDSFVSPREAKKQLKKDLKSQEQCAGSPTKVSRRTSPALRILEPMWMDSNRTATLRASFLKCPKK</sequence>
<comment type="function">
    <text evidence="1 4">Plays a major role in the shutoff of the host protein expression by cleaving mRNAs probably via an endonuclease activity. This host shutoff allows the virus to escape from the host antiviral response (By similarity). Hijacks host RNA splicing machinery to selectively target host RNAs containing introns for destruction. This may explain the preferential degradation of RNAs that have undergone co- or post-transcriptional processing (By similarity).</text>
</comment>
<comment type="subcellular location">
    <subcellularLocation>
        <location evidence="4">Host cytoplasm</location>
    </subcellularLocation>
    <subcellularLocation>
        <location evidence="4">Host nucleus</location>
    </subcellularLocation>
</comment>
<comment type="alternative products">
    <event type="ribosomal frameshifting"/>
    <isoform>
        <id>P0CK67-1</id>
        <name>PA-X</name>
        <sequence type="displayed"/>
    </isoform>
    <isoform>
        <id>A4GBY4-1</id>
        <name>PA</name>
        <sequence type="external"/>
    </isoform>
</comment>
<comment type="domain">
    <text evidence="1 4">The probable endonuclease active site in the N-terminus and the basic amino acid cluster in the C-terminus are important for the shutoff activity. The C-terminus acts as a nuclear localization signal (By similarity). The C-terminus is recruited to host protein complexes involved in nuclear Pol II RNA processing (By similarity).</text>
</comment>
<comment type="similarity">
    <text evidence="6">Belongs to the influenza viruses PA-X family.</text>
</comment>
<protein>
    <recommendedName>
        <fullName>Protein PA-X</fullName>
    </recommendedName>
</protein>
<organism>
    <name type="scientific">Influenza A virus (strain A/Brazil/11/1978 H1N1)</name>
    <dbReference type="NCBI Taxonomy" id="393560"/>
    <lineage>
        <taxon>Viruses</taxon>
        <taxon>Riboviria</taxon>
        <taxon>Orthornavirae</taxon>
        <taxon>Negarnaviricota</taxon>
        <taxon>Polyploviricotina</taxon>
        <taxon>Insthoviricetes</taxon>
        <taxon>Articulavirales</taxon>
        <taxon>Orthomyxoviridae</taxon>
        <taxon>Alphainfluenzavirus</taxon>
        <taxon>Alphainfluenzavirus influenzae</taxon>
        <taxon>Influenza A virus</taxon>
    </lineage>
</organism>
<reference key="1">
    <citation type="submission" date="2007-03" db="EMBL/GenBank/DDBJ databases">
        <title>The NIAID influenza genome sequencing project.</title>
        <authorList>
            <person name="Ghedin E."/>
            <person name="Spiro D."/>
            <person name="Miller N."/>
            <person name="Zaborsky J."/>
            <person name="Feldblyum T."/>
            <person name="Subbu V."/>
            <person name="Shumway M."/>
            <person name="Sparenborg J."/>
            <person name="Groveman L."/>
            <person name="Halpin R."/>
            <person name="Sitz J."/>
            <person name="Koo H."/>
            <person name="Salzberg S.L."/>
            <person name="Webster R.G."/>
            <person name="Hoffmann E."/>
            <person name="Krauss S."/>
            <person name="Naeve C."/>
            <person name="Bao Y."/>
            <person name="Bolotov P."/>
            <person name="Dernovoy D."/>
            <person name="Kiryutin B."/>
            <person name="Lipman D.J."/>
            <person name="Tatusova T."/>
        </authorList>
    </citation>
    <scope>NUCLEOTIDE SEQUENCE [GENOMIC RNA]</scope>
</reference>
<reference key="2">
    <citation type="submission" date="2007-03" db="EMBL/GenBank/DDBJ databases">
        <authorList>
            <consortium name="The NIAID Influenza Genome Sequencing Consortium"/>
        </authorList>
    </citation>
    <scope>NUCLEOTIDE SEQUENCE [GENOMIC RNA]</scope>
</reference>
<keyword id="KW-1132">Decay of host mRNAs by virus</keyword>
<keyword id="KW-1262">Eukaryotic host gene expression shutoff by virus</keyword>
<keyword id="KW-1035">Host cytoplasm</keyword>
<keyword id="KW-1190">Host gene expression shutoff by virus</keyword>
<keyword id="KW-1192">Host mRNA suppression by virus</keyword>
<keyword id="KW-1048">Host nucleus</keyword>
<keyword id="KW-0945">Host-virus interaction</keyword>
<keyword id="KW-0688">Ribosomal frameshifting</keyword>